<gene>
    <name evidence="2" type="primary">psbD</name>
</gene>
<sequence length="353" mass="39578">MTIALGKFTKDEKDLFDIMDDWLRRDRFVFVGWSGLLLFPCAYFALGGWFTGTTFVTSWYTHGLASSYLEGCNFLTAAVSTPANSLAHSLLLLWGPEAQGDFTRWCQLGGLWTFVALHGAFALIGFMLRQFEIARSVQLRPYNAIAFSGPIAVFVSVFLIYPLGQSGWFFAPSFGVAAIFRFILFFQGFHNWTLNPFHMMGVAGVLGAALLCAIHGATVENTLFEDGDGANTFRAFNPTQAEETYSMVTANRFWSQIFGVAFSNKRWLHFFMLFVPVTGLWMSALGVVGLALNLRAYDFVSQEIRAAEDPEFETFYTKNILLNEGIRAWMAAQDQPHENLIFPEEVLPRGNAL</sequence>
<evidence type="ECO:0000250" key="1">
    <source>
        <dbReference type="UniProtKB" id="P56761"/>
    </source>
</evidence>
<evidence type="ECO:0000255" key="2">
    <source>
        <dbReference type="HAMAP-Rule" id="MF_01383"/>
    </source>
</evidence>
<accession>B0Z4M2</accession>
<geneLocation type="chloroplast"/>
<protein>
    <recommendedName>
        <fullName evidence="2">Photosystem II D2 protein</fullName>
        <shortName evidence="2">PSII D2 protein</shortName>
        <ecNumber evidence="2">1.10.3.9</ecNumber>
    </recommendedName>
    <alternativeName>
        <fullName evidence="2">Photosystem Q(A) protein</fullName>
    </alternativeName>
</protein>
<dbReference type="EC" id="1.10.3.9" evidence="2"/>
<dbReference type="EMBL" id="EU262887">
    <property type="protein sequence ID" value="ABW98700.1"/>
    <property type="molecule type" value="Genomic_DNA"/>
</dbReference>
<dbReference type="RefSeq" id="YP_001687133.1">
    <property type="nucleotide sequence ID" value="NC_010358.2"/>
</dbReference>
<dbReference type="SMR" id="B0Z4M2"/>
<dbReference type="GeneID" id="5951884"/>
<dbReference type="GO" id="GO:0009535">
    <property type="term" value="C:chloroplast thylakoid membrane"/>
    <property type="evidence" value="ECO:0007669"/>
    <property type="project" value="UniProtKB-SubCell"/>
</dbReference>
<dbReference type="GO" id="GO:0009523">
    <property type="term" value="C:photosystem II"/>
    <property type="evidence" value="ECO:0007669"/>
    <property type="project" value="UniProtKB-KW"/>
</dbReference>
<dbReference type="GO" id="GO:0016168">
    <property type="term" value="F:chlorophyll binding"/>
    <property type="evidence" value="ECO:0007669"/>
    <property type="project" value="UniProtKB-UniRule"/>
</dbReference>
<dbReference type="GO" id="GO:0045156">
    <property type="term" value="F:electron transporter, transferring electrons within the cyclic electron transport pathway of photosynthesis activity"/>
    <property type="evidence" value="ECO:0007669"/>
    <property type="project" value="InterPro"/>
</dbReference>
<dbReference type="GO" id="GO:0005506">
    <property type="term" value="F:iron ion binding"/>
    <property type="evidence" value="ECO:0007669"/>
    <property type="project" value="UniProtKB-UniRule"/>
</dbReference>
<dbReference type="GO" id="GO:0010242">
    <property type="term" value="F:oxygen evolving activity"/>
    <property type="evidence" value="ECO:0007669"/>
    <property type="project" value="UniProtKB-EC"/>
</dbReference>
<dbReference type="GO" id="GO:0009772">
    <property type="term" value="P:photosynthetic electron transport in photosystem II"/>
    <property type="evidence" value="ECO:0007669"/>
    <property type="project" value="InterPro"/>
</dbReference>
<dbReference type="CDD" id="cd09288">
    <property type="entry name" value="Photosystem-II_D2"/>
    <property type="match status" value="1"/>
</dbReference>
<dbReference type="FunFam" id="1.20.85.10:FF:000001">
    <property type="entry name" value="photosystem II D2 protein-like"/>
    <property type="match status" value="1"/>
</dbReference>
<dbReference type="Gene3D" id="1.20.85.10">
    <property type="entry name" value="Photosystem II protein D1-like"/>
    <property type="match status" value="1"/>
</dbReference>
<dbReference type="HAMAP" id="MF_01383">
    <property type="entry name" value="PSII_PsbD_D2"/>
    <property type="match status" value="1"/>
</dbReference>
<dbReference type="InterPro" id="IPR055266">
    <property type="entry name" value="D1/D2"/>
</dbReference>
<dbReference type="InterPro" id="IPR036854">
    <property type="entry name" value="Photo_II_D1/D2_sf"/>
</dbReference>
<dbReference type="InterPro" id="IPR000484">
    <property type="entry name" value="Photo_RC_L/M"/>
</dbReference>
<dbReference type="InterPro" id="IPR055265">
    <property type="entry name" value="Photo_RC_L/M_CS"/>
</dbReference>
<dbReference type="InterPro" id="IPR005868">
    <property type="entry name" value="PSII_PsbD/D2"/>
</dbReference>
<dbReference type="NCBIfam" id="TIGR01152">
    <property type="entry name" value="psbD"/>
    <property type="match status" value="1"/>
</dbReference>
<dbReference type="PANTHER" id="PTHR33149:SF57">
    <property type="entry name" value="PHOTOSYSTEM II D2 PROTEIN"/>
    <property type="match status" value="1"/>
</dbReference>
<dbReference type="PANTHER" id="PTHR33149">
    <property type="entry name" value="PHOTOSYSTEM II PROTEIN D1"/>
    <property type="match status" value="1"/>
</dbReference>
<dbReference type="Pfam" id="PF00124">
    <property type="entry name" value="Photo_RC"/>
    <property type="match status" value="1"/>
</dbReference>
<dbReference type="PRINTS" id="PR00256">
    <property type="entry name" value="REACTNCENTRE"/>
</dbReference>
<dbReference type="SUPFAM" id="SSF81483">
    <property type="entry name" value="Bacterial photosystem II reaction centre, L and M subunits"/>
    <property type="match status" value="1"/>
</dbReference>
<dbReference type="PROSITE" id="PS00244">
    <property type="entry name" value="REACTION_CENTER"/>
    <property type="match status" value="1"/>
</dbReference>
<name>PSBD_OENAR</name>
<feature type="initiator methionine" description="Removed" evidence="1">
    <location>
        <position position="1"/>
    </location>
</feature>
<feature type="chain" id="PRO_0000359675" description="Photosystem II D2 protein">
    <location>
        <begin position="2"/>
        <end position="353"/>
    </location>
</feature>
<feature type="transmembrane region" description="Helical" evidence="2">
    <location>
        <begin position="41"/>
        <end position="61"/>
    </location>
</feature>
<feature type="transmembrane region" description="Helical" evidence="2">
    <location>
        <begin position="125"/>
        <end position="141"/>
    </location>
</feature>
<feature type="transmembrane region" description="Helical" evidence="2">
    <location>
        <begin position="153"/>
        <end position="166"/>
    </location>
</feature>
<feature type="transmembrane region" description="Helical" evidence="2">
    <location>
        <begin position="208"/>
        <end position="228"/>
    </location>
</feature>
<feature type="transmembrane region" description="Helical" evidence="2">
    <location>
        <begin position="279"/>
        <end position="295"/>
    </location>
</feature>
<feature type="binding site" description="axial binding residue" evidence="2">
    <location>
        <position position="118"/>
    </location>
    <ligand>
        <name>chlorophyll a</name>
        <dbReference type="ChEBI" id="CHEBI:58416"/>
        <label>ChlzD2</label>
    </ligand>
    <ligandPart>
        <name>Mg</name>
        <dbReference type="ChEBI" id="CHEBI:25107"/>
    </ligandPart>
</feature>
<feature type="binding site" evidence="2">
    <location>
        <position position="130"/>
    </location>
    <ligand>
        <name>pheophytin a</name>
        <dbReference type="ChEBI" id="CHEBI:136840"/>
        <label>D2</label>
    </ligand>
</feature>
<feature type="binding site" evidence="2">
    <location>
        <position position="143"/>
    </location>
    <ligand>
        <name>pheophytin a</name>
        <dbReference type="ChEBI" id="CHEBI:136840"/>
        <label>D2</label>
    </ligand>
</feature>
<feature type="binding site" description="axial binding residue" evidence="2">
    <location>
        <position position="198"/>
    </location>
    <ligand>
        <name>chlorophyll a</name>
        <dbReference type="ChEBI" id="CHEBI:58416"/>
        <label>PD2</label>
    </ligand>
    <ligandPart>
        <name>Mg</name>
        <dbReference type="ChEBI" id="CHEBI:25107"/>
    </ligandPart>
</feature>
<feature type="binding site" evidence="2">
    <location>
        <position position="215"/>
    </location>
    <ligand>
        <name>a plastoquinone</name>
        <dbReference type="ChEBI" id="CHEBI:17757"/>
        <label>Q(A)</label>
    </ligand>
</feature>
<feature type="binding site" evidence="2">
    <location>
        <position position="215"/>
    </location>
    <ligand>
        <name>Fe cation</name>
        <dbReference type="ChEBI" id="CHEBI:24875"/>
        <note>ligand shared with heterodimeric partner</note>
    </ligand>
</feature>
<feature type="binding site" evidence="2">
    <location>
        <position position="262"/>
    </location>
    <ligand>
        <name>a plastoquinone</name>
        <dbReference type="ChEBI" id="CHEBI:17757"/>
        <label>Q(A)</label>
    </ligand>
</feature>
<feature type="binding site" evidence="2">
    <location>
        <position position="269"/>
    </location>
    <ligand>
        <name>Fe cation</name>
        <dbReference type="ChEBI" id="CHEBI:24875"/>
        <note>ligand shared with heterodimeric partner</note>
    </ligand>
</feature>
<feature type="modified residue" description="N-acetylthreonine" evidence="1">
    <location>
        <position position="2"/>
    </location>
</feature>
<feature type="modified residue" description="Phosphothreonine" evidence="1">
    <location>
        <position position="2"/>
    </location>
</feature>
<reference key="1">
    <citation type="journal article" date="2008" name="Nucleic Acids Res.">
        <title>The complete nucleotide sequences of the five genetically distinct plastid genomes of Oenothera, subsection Oenothera: I. Sequence evaluation and plastome evolution.</title>
        <authorList>
            <person name="Greiner S."/>
            <person name="Wang X."/>
            <person name="Rauwolf U."/>
            <person name="Silber M.V."/>
            <person name="Mayer K."/>
            <person name="Meurer J."/>
            <person name="Haberer G."/>
            <person name="Herrmann R.G."/>
        </authorList>
    </citation>
    <scope>NUCLEOTIDE SEQUENCE [LARGE SCALE GENOMIC DNA]</scope>
    <source>
        <strain>cv. Douthat 1</strain>
    </source>
</reference>
<organism>
    <name type="scientific">Oenothera argillicola</name>
    <name type="common">Appalachian evening primrose</name>
    <dbReference type="NCBI Taxonomy" id="3940"/>
    <lineage>
        <taxon>Eukaryota</taxon>
        <taxon>Viridiplantae</taxon>
        <taxon>Streptophyta</taxon>
        <taxon>Embryophyta</taxon>
        <taxon>Tracheophyta</taxon>
        <taxon>Spermatophyta</taxon>
        <taxon>Magnoliopsida</taxon>
        <taxon>eudicotyledons</taxon>
        <taxon>Gunneridae</taxon>
        <taxon>Pentapetalae</taxon>
        <taxon>rosids</taxon>
        <taxon>malvids</taxon>
        <taxon>Myrtales</taxon>
        <taxon>Onagraceae</taxon>
        <taxon>Onagroideae</taxon>
        <taxon>Onagreae</taxon>
        <taxon>Oenothera</taxon>
    </lineage>
</organism>
<proteinExistence type="inferred from homology"/>
<comment type="function">
    <text evidence="2">Photosystem II (PSII) is a light-driven water:plastoquinone oxidoreductase that uses light energy to abstract electrons from H(2)O, generating O(2) and a proton gradient subsequently used for ATP formation. It consists of a core antenna complex that captures photons, and an electron transfer chain that converts photonic excitation into a charge separation. The D1/D2 (PsbA/PsbD) reaction center heterodimer binds P680, the primary electron donor of PSII as well as several subsequent electron acceptors. D2 is needed for assembly of a stable PSII complex.</text>
</comment>
<comment type="catalytic activity">
    <reaction evidence="2">
        <text>2 a plastoquinone + 4 hnu + 2 H2O = 2 a plastoquinol + O2</text>
        <dbReference type="Rhea" id="RHEA:36359"/>
        <dbReference type="Rhea" id="RHEA-COMP:9561"/>
        <dbReference type="Rhea" id="RHEA-COMP:9562"/>
        <dbReference type="ChEBI" id="CHEBI:15377"/>
        <dbReference type="ChEBI" id="CHEBI:15379"/>
        <dbReference type="ChEBI" id="CHEBI:17757"/>
        <dbReference type="ChEBI" id="CHEBI:30212"/>
        <dbReference type="ChEBI" id="CHEBI:62192"/>
        <dbReference type="EC" id="1.10.3.9"/>
    </reaction>
</comment>
<comment type="cofactor">
    <text evidence="2">The D1/D2 heterodimer binds P680, chlorophylls that are the primary electron donor of PSII, and subsequent electron acceptors. It shares a non-heme iron and each subunit binds pheophytin, quinone, additional chlorophylls, carotenoids and lipids. There is also a Cl(-1) ion associated with D1 and D2, which is required for oxygen evolution. The PSII complex binds additional chlorophylls, carotenoids and specific lipids.</text>
</comment>
<comment type="subunit">
    <text evidence="2">PSII is composed of 1 copy each of membrane proteins PsbA, PsbB, PsbC, PsbD, PsbE, PsbF, PsbH, PsbI, PsbJ, PsbK, PsbL, PsbM, PsbT, PsbX, PsbY, PsbZ, Psb30/Ycf12, at least 3 peripheral proteins of the oxygen-evolving complex and a large number of cofactors. It forms dimeric complexes.</text>
</comment>
<comment type="subcellular location">
    <subcellularLocation>
        <location evidence="2">Plastid</location>
        <location evidence="2">Chloroplast thylakoid membrane</location>
        <topology evidence="2">Multi-pass membrane protein</topology>
    </subcellularLocation>
</comment>
<comment type="miscellaneous">
    <text evidence="2">2 of the reaction center chlorophylls (ChlD1 and ChlD2) are entirely coordinated by water.</text>
</comment>
<comment type="similarity">
    <text evidence="2">Belongs to the reaction center PufL/M/PsbA/D family.</text>
</comment>
<keyword id="KW-0007">Acetylation</keyword>
<keyword id="KW-0148">Chlorophyll</keyword>
<keyword id="KW-0150">Chloroplast</keyword>
<keyword id="KW-0157">Chromophore</keyword>
<keyword id="KW-0249">Electron transport</keyword>
<keyword id="KW-0408">Iron</keyword>
<keyword id="KW-0460">Magnesium</keyword>
<keyword id="KW-0472">Membrane</keyword>
<keyword id="KW-0479">Metal-binding</keyword>
<keyword id="KW-0560">Oxidoreductase</keyword>
<keyword id="KW-0597">Phosphoprotein</keyword>
<keyword id="KW-0602">Photosynthesis</keyword>
<keyword id="KW-0604">Photosystem II</keyword>
<keyword id="KW-0934">Plastid</keyword>
<keyword id="KW-0793">Thylakoid</keyword>
<keyword id="KW-0812">Transmembrane</keyword>
<keyword id="KW-1133">Transmembrane helix</keyword>
<keyword id="KW-0813">Transport</keyword>